<proteinExistence type="inferred from homology"/>
<reference key="1">
    <citation type="journal article" date="2006" name="Nat. Biotechnol.">
        <title>Genome sequence of the bioplastic-producing 'Knallgas' bacterium Ralstonia eutropha H16.</title>
        <authorList>
            <person name="Pohlmann A."/>
            <person name="Fricke W.F."/>
            <person name="Reinecke F."/>
            <person name="Kusian B."/>
            <person name="Liesegang H."/>
            <person name="Cramm R."/>
            <person name="Eitinger T."/>
            <person name="Ewering C."/>
            <person name="Poetter M."/>
            <person name="Schwartz E."/>
            <person name="Strittmatter A."/>
            <person name="Voss I."/>
            <person name="Gottschalk G."/>
            <person name="Steinbuechel A."/>
            <person name="Friedrich B."/>
            <person name="Bowien B."/>
        </authorList>
    </citation>
    <scope>NUCLEOTIDE SEQUENCE [LARGE SCALE GENOMIC DNA]</scope>
    <source>
        <strain>ATCC 17699 / DSM 428 / KCTC 22496 / NCIMB 10442 / H16 / Stanier 337</strain>
    </source>
</reference>
<feature type="chain" id="PRO_1000064212" description="Glycerol-3-phosphate acyltransferase">
    <location>
        <begin position="1"/>
        <end position="202"/>
    </location>
</feature>
<feature type="transmembrane region" description="Helical" evidence="1">
    <location>
        <begin position="2"/>
        <end position="22"/>
    </location>
</feature>
<feature type="transmembrane region" description="Helical" evidence="1">
    <location>
        <begin position="80"/>
        <end position="100"/>
    </location>
</feature>
<feature type="transmembrane region" description="Helical" evidence="1">
    <location>
        <begin position="119"/>
        <end position="139"/>
    </location>
</feature>
<feature type="transmembrane region" description="Helical" evidence="1">
    <location>
        <begin position="158"/>
        <end position="178"/>
    </location>
</feature>
<sequence length="202" mass="21263">MANLLFALAAYLIGSVSFAVVVSKLMGLPDPHSYGSGNPGATNVLRTGNKKAAILTLIGDALKGWLAVWLAARFGPAYGLNETGLAMVALAVFLGHLFPVYHRFAGGKGVATAAGILLAIDPILGLGTLATWLIIAFFFRYSSLAALVAAIFAPFFHVLMNGVDVMTGAIFVISVLLIARHRQNIAKLLAGKESRIGEKKKV</sequence>
<gene>
    <name evidence="1" type="primary">plsY</name>
    <name type="ordered locus">H16_A0588</name>
</gene>
<dbReference type="EC" id="2.3.1.275" evidence="1"/>
<dbReference type="EMBL" id="AM260479">
    <property type="protein sequence ID" value="CAJ91736.1"/>
    <property type="molecule type" value="Genomic_DNA"/>
</dbReference>
<dbReference type="RefSeq" id="WP_011614592.1">
    <property type="nucleotide sequence ID" value="NC_008313.1"/>
</dbReference>
<dbReference type="SMR" id="Q0KE35"/>
<dbReference type="STRING" id="381666.H16_A0588"/>
<dbReference type="KEGG" id="reh:H16_A0588"/>
<dbReference type="eggNOG" id="COG0344">
    <property type="taxonomic scope" value="Bacteria"/>
</dbReference>
<dbReference type="HOGENOM" id="CLU_081254_0_0_4"/>
<dbReference type="OrthoDB" id="9777124at2"/>
<dbReference type="UniPathway" id="UPA00085"/>
<dbReference type="Proteomes" id="UP000008210">
    <property type="component" value="Chromosome 1"/>
</dbReference>
<dbReference type="GO" id="GO:0005886">
    <property type="term" value="C:plasma membrane"/>
    <property type="evidence" value="ECO:0007669"/>
    <property type="project" value="UniProtKB-SubCell"/>
</dbReference>
<dbReference type="GO" id="GO:0043772">
    <property type="term" value="F:acyl-phosphate glycerol-3-phosphate acyltransferase activity"/>
    <property type="evidence" value="ECO:0007669"/>
    <property type="project" value="UniProtKB-UniRule"/>
</dbReference>
<dbReference type="GO" id="GO:0008654">
    <property type="term" value="P:phospholipid biosynthetic process"/>
    <property type="evidence" value="ECO:0007669"/>
    <property type="project" value="UniProtKB-UniRule"/>
</dbReference>
<dbReference type="HAMAP" id="MF_01043">
    <property type="entry name" value="PlsY"/>
    <property type="match status" value="1"/>
</dbReference>
<dbReference type="InterPro" id="IPR003811">
    <property type="entry name" value="G3P_acylTferase_PlsY"/>
</dbReference>
<dbReference type="NCBIfam" id="TIGR00023">
    <property type="entry name" value="glycerol-3-phosphate 1-O-acyltransferase PlsY"/>
    <property type="match status" value="1"/>
</dbReference>
<dbReference type="PANTHER" id="PTHR30309:SF0">
    <property type="entry name" value="GLYCEROL-3-PHOSPHATE ACYLTRANSFERASE-RELATED"/>
    <property type="match status" value="1"/>
</dbReference>
<dbReference type="PANTHER" id="PTHR30309">
    <property type="entry name" value="INNER MEMBRANE PROTEIN YGIH"/>
    <property type="match status" value="1"/>
</dbReference>
<dbReference type="Pfam" id="PF02660">
    <property type="entry name" value="G3P_acyltransf"/>
    <property type="match status" value="1"/>
</dbReference>
<dbReference type="SMART" id="SM01207">
    <property type="entry name" value="G3P_acyltransf"/>
    <property type="match status" value="1"/>
</dbReference>
<protein>
    <recommendedName>
        <fullName evidence="1">Glycerol-3-phosphate acyltransferase</fullName>
    </recommendedName>
    <alternativeName>
        <fullName evidence="1">Acyl-PO4 G3P acyltransferase</fullName>
    </alternativeName>
    <alternativeName>
        <fullName evidence="1">Acyl-phosphate--glycerol-3-phosphate acyltransferase</fullName>
    </alternativeName>
    <alternativeName>
        <fullName evidence="1">G3P acyltransferase</fullName>
        <shortName evidence="1">GPAT</shortName>
        <ecNumber evidence="1">2.3.1.275</ecNumber>
    </alternativeName>
    <alternativeName>
        <fullName evidence="1">Lysophosphatidic acid synthase</fullName>
        <shortName evidence="1">LPA synthase</shortName>
    </alternativeName>
</protein>
<organism>
    <name type="scientific">Cupriavidus necator (strain ATCC 17699 / DSM 428 / KCTC 22496 / NCIMB 10442 / H16 / Stanier 337)</name>
    <name type="common">Ralstonia eutropha</name>
    <dbReference type="NCBI Taxonomy" id="381666"/>
    <lineage>
        <taxon>Bacteria</taxon>
        <taxon>Pseudomonadati</taxon>
        <taxon>Pseudomonadota</taxon>
        <taxon>Betaproteobacteria</taxon>
        <taxon>Burkholderiales</taxon>
        <taxon>Burkholderiaceae</taxon>
        <taxon>Cupriavidus</taxon>
    </lineage>
</organism>
<evidence type="ECO:0000255" key="1">
    <source>
        <dbReference type="HAMAP-Rule" id="MF_01043"/>
    </source>
</evidence>
<name>PLSY_CUPNH</name>
<accession>Q0KE35</accession>
<comment type="function">
    <text evidence="1">Catalyzes the transfer of an acyl group from acyl-phosphate (acyl-PO(4)) to glycerol-3-phosphate (G3P) to form lysophosphatidic acid (LPA). This enzyme utilizes acyl-phosphate as fatty acyl donor, but not acyl-CoA or acyl-ACP.</text>
</comment>
<comment type="catalytic activity">
    <reaction evidence="1">
        <text>an acyl phosphate + sn-glycerol 3-phosphate = a 1-acyl-sn-glycero-3-phosphate + phosphate</text>
        <dbReference type="Rhea" id="RHEA:34075"/>
        <dbReference type="ChEBI" id="CHEBI:43474"/>
        <dbReference type="ChEBI" id="CHEBI:57597"/>
        <dbReference type="ChEBI" id="CHEBI:57970"/>
        <dbReference type="ChEBI" id="CHEBI:59918"/>
        <dbReference type="EC" id="2.3.1.275"/>
    </reaction>
</comment>
<comment type="pathway">
    <text evidence="1">Lipid metabolism; phospholipid metabolism.</text>
</comment>
<comment type="subunit">
    <text evidence="1">Probably interacts with PlsX.</text>
</comment>
<comment type="subcellular location">
    <subcellularLocation>
        <location evidence="1">Cell inner membrane</location>
        <topology evidence="1">Multi-pass membrane protein</topology>
    </subcellularLocation>
</comment>
<comment type="similarity">
    <text evidence="1">Belongs to the PlsY family.</text>
</comment>
<keyword id="KW-0997">Cell inner membrane</keyword>
<keyword id="KW-1003">Cell membrane</keyword>
<keyword id="KW-0444">Lipid biosynthesis</keyword>
<keyword id="KW-0443">Lipid metabolism</keyword>
<keyword id="KW-0472">Membrane</keyword>
<keyword id="KW-0594">Phospholipid biosynthesis</keyword>
<keyword id="KW-1208">Phospholipid metabolism</keyword>
<keyword id="KW-1185">Reference proteome</keyword>
<keyword id="KW-0808">Transferase</keyword>
<keyword id="KW-0812">Transmembrane</keyword>
<keyword id="KW-1133">Transmembrane helix</keyword>